<proteinExistence type="inferred from homology"/>
<name>TMCAL_SYNWW</name>
<dbReference type="EC" id="6.3.4.-" evidence="1"/>
<dbReference type="EMBL" id="CP000448">
    <property type="protein sequence ID" value="ABI68087.1"/>
    <property type="molecule type" value="Genomic_DNA"/>
</dbReference>
<dbReference type="RefSeq" id="WP_011640192.1">
    <property type="nucleotide sequence ID" value="NC_008346.1"/>
</dbReference>
<dbReference type="SMR" id="Q0AYW7"/>
<dbReference type="STRING" id="335541.Swol_0766"/>
<dbReference type="KEGG" id="swo:Swol_0766"/>
<dbReference type="eggNOG" id="COG1323">
    <property type="taxonomic scope" value="Bacteria"/>
</dbReference>
<dbReference type="HOGENOM" id="CLU_038915_0_1_9"/>
<dbReference type="OrthoDB" id="9769796at2"/>
<dbReference type="Proteomes" id="UP000001968">
    <property type="component" value="Chromosome"/>
</dbReference>
<dbReference type="GO" id="GO:0005737">
    <property type="term" value="C:cytoplasm"/>
    <property type="evidence" value="ECO:0007669"/>
    <property type="project" value="UniProtKB-SubCell"/>
</dbReference>
<dbReference type="GO" id="GO:0005524">
    <property type="term" value="F:ATP binding"/>
    <property type="evidence" value="ECO:0007669"/>
    <property type="project" value="UniProtKB-KW"/>
</dbReference>
<dbReference type="GO" id="GO:0016879">
    <property type="term" value="F:ligase activity, forming carbon-nitrogen bonds"/>
    <property type="evidence" value="ECO:0007669"/>
    <property type="project" value="UniProtKB-UniRule"/>
</dbReference>
<dbReference type="GO" id="GO:0000049">
    <property type="term" value="F:tRNA binding"/>
    <property type="evidence" value="ECO:0007669"/>
    <property type="project" value="UniProtKB-KW"/>
</dbReference>
<dbReference type="GO" id="GO:0006400">
    <property type="term" value="P:tRNA modification"/>
    <property type="evidence" value="ECO:0007669"/>
    <property type="project" value="UniProtKB-UniRule"/>
</dbReference>
<dbReference type="Gene3D" id="3.40.50.620">
    <property type="entry name" value="HUPs"/>
    <property type="match status" value="1"/>
</dbReference>
<dbReference type="HAMAP" id="MF_01539">
    <property type="entry name" value="TmcAL"/>
    <property type="match status" value="1"/>
</dbReference>
<dbReference type="InterPro" id="IPR004821">
    <property type="entry name" value="Cyt_trans-like"/>
</dbReference>
<dbReference type="InterPro" id="IPR014729">
    <property type="entry name" value="Rossmann-like_a/b/a_fold"/>
</dbReference>
<dbReference type="InterPro" id="IPR008513">
    <property type="entry name" value="tRNA(Met)_cyd_acetate_ligase"/>
</dbReference>
<dbReference type="NCBIfam" id="TIGR00125">
    <property type="entry name" value="cyt_tran_rel"/>
    <property type="match status" value="1"/>
</dbReference>
<dbReference type="NCBIfam" id="NF010191">
    <property type="entry name" value="PRK13670.1"/>
    <property type="match status" value="1"/>
</dbReference>
<dbReference type="PANTHER" id="PTHR37825">
    <property type="entry name" value="TRNA(MET) CYTIDINE ACETATE LIGASE"/>
    <property type="match status" value="1"/>
</dbReference>
<dbReference type="PANTHER" id="PTHR37825:SF1">
    <property type="entry name" value="TRNA(MET) CYTIDINE ACETATE LIGASE"/>
    <property type="match status" value="1"/>
</dbReference>
<dbReference type="Pfam" id="PF05636">
    <property type="entry name" value="HIGH_NTase1"/>
    <property type="match status" value="1"/>
</dbReference>
<dbReference type="SUPFAM" id="SSF52374">
    <property type="entry name" value="Nucleotidylyl transferase"/>
    <property type="match status" value="1"/>
</dbReference>
<organism>
    <name type="scientific">Syntrophomonas wolfei subsp. wolfei (strain DSM 2245B / Goettingen)</name>
    <dbReference type="NCBI Taxonomy" id="335541"/>
    <lineage>
        <taxon>Bacteria</taxon>
        <taxon>Bacillati</taxon>
        <taxon>Bacillota</taxon>
        <taxon>Clostridia</taxon>
        <taxon>Eubacteriales</taxon>
        <taxon>Syntrophomonadaceae</taxon>
        <taxon>Syntrophomonas</taxon>
    </lineage>
</organism>
<feature type="chain" id="PRO_0000300203" description="tRNA(Met) cytidine acetate ligase">
    <location>
        <begin position="1"/>
        <end position="416"/>
    </location>
</feature>
<feature type="binding site" evidence="1">
    <location>
        <begin position="7"/>
        <end position="20"/>
    </location>
    <ligand>
        <name>ATP</name>
        <dbReference type="ChEBI" id="CHEBI:30616"/>
    </ligand>
</feature>
<feature type="binding site" evidence="1">
    <location>
        <position position="102"/>
    </location>
    <ligand>
        <name>ATP</name>
        <dbReference type="ChEBI" id="CHEBI:30616"/>
    </ligand>
</feature>
<feature type="binding site" evidence="1">
    <location>
        <position position="166"/>
    </location>
    <ligand>
        <name>ATP</name>
        <dbReference type="ChEBI" id="CHEBI:30616"/>
    </ligand>
</feature>
<feature type="binding site" evidence="1">
    <location>
        <position position="191"/>
    </location>
    <ligand>
        <name>ATP</name>
        <dbReference type="ChEBI" id="CHEBI:30616"/>
    </ligand>
</feature>
<protein>
    <recommendedName>
        <fullName evidence="1">tRNA(Met) cytidine acetate ligase</fullName>
        <ecNumber evidence="1">6.3.4.-</ecNumber>
    </recommendedName>
</protein>
<keyword id="KW-0067">ATP-binding</keyword>
<keyword id="KW-0963">Cytoplasm</keyword>
<keyword id="KW-0436">Ligase</keyword>
<keyword id="KW-0547">Nucleotide-binding</keyword>
<keyword id="KW-1185">Reference proteome</keyword>
<keyword id="KW-0694">RNA-binding</keyword>
<keyword id="KW-0819">tRNA processing</keyword>
<keyword id="KW-0820">tRNA-binding</keyword>
<gene>
    <name evidence="1" type="primary">tmcAL</name>
    <name type="ordered locus">Swol_0766</name>
</gene>
<sequence length="416" mass="46549">MAILGIVAEYNPFHNGHLYLLEKSRQQGDFSATVVVMSGNFLQRGEPAFCDKWARAEMALTAGVDLLIELPFCFATRSAYYFAKGAVQLLQRSGVVTHLAFGSESGQLSQLQEIAGILAHEPESYKTALKKRLSQGWSFPLARSSALQEYMGGEKKQLQEILPGPNNILALEYLRVIEEEGIPLLPLTIPRQGSSFHSSDLSPYSSARAIRQALYHNLDWEKITNSISPATEKILQREIALGRAPIGPDSLEQAIMVNLRLVSTDYLREIYEVSEGLEFRIKEATNSCGTLEELRQFIKSKRYSLTRINRTLLYTLFALSKNQVELYDQHGPQYLHILGFSAKGQEILQKIKIKSKLKIFSRGSEMKQARDKNPGTALAEMIKLDCQATDVYSLLFPNPATRRAGRDFTTSPVPGT</sequence>
<comment type="function">
    <text evidence="1">Catalyzes the formation of N(4)-acetylcytidine (ac(4)C) at the wobble position of elongator tRNA(Met), using acetate and ATP as substrates. First activates an acetate ion to form acetyladenylate (Ac-AMP) and then transfers the acetyl group to tRNA to form ac(4)C34.</text>
</comment>
<comment type="catalytic activity">
    <reaction evidence="1">
        <text>cytidine(34) in elongator tRNA(Met) + acetate + ATP = N(4)-acetylcytidine(34) in elongator tRNA(Met) + AMP + diphosphate</text>
        <dbReference type="Rhea" id="RHEA:58144"/>
        <dbReference type="Rhea" id="RHEA-COMP:10693"/>
        <dbReference type="Rhea" id="RHEA-COMP:10694"/>
        <dbReference type="ChEBI" id="CHEBI:30089"/>
        <dbReference type="ChEBI" id="CHEBI:30616"/>
        <dbReference type="ChEBI" id="CHEBI:33019"/>
        <dbReference type="ChEBI" id="CHEBI:74900"/>
        <dbReference type="ChEBI" id="CHEBI:82748"/>
        <dbReference type="ChEBI" id="CHEBI:456215"/>
    </reaction>
</comment>
<comment type="subcellular location">
    <subcellularLocation>
        <location evidence="1">Cytoplasm</location>
    </subcellularLocation>
</comment>
<comment type="similarity">
    <text evidence="1">Belongs to the TmcAL family.</text>
</comment>
<accession>Q0AYW7</accession>
<evidence type="ECO:0000255" key="1">
    <source>
        <dbReference type="HAMAP-Rule" id="MF_01539"/>
    </source>
</evidence>
<reference key="1">
    <citation type="journal article" date="2010" name="Environ. Microbiol.">
        <title>The genome of Syntrophomonas wolfei: new insights into syntrophic metabolism and biohydrogen production.</title>
        <authorList>
            <person name="Sieber J.R."/>
            <person name="Sims D.R."/>
            <person name="Han C."/>
            <person name="Kim E."/>
            <person name="Lykidis A."/>
            <person name="Lapidus A.L."/>
            <person name="McDonnald E."/>
            <person name="Rohlin L."/>
            <person name="Culley D.E."/>
            <person name="Gunsalus R."/>
            <person name="McInerney M.J."/>
        </authorList>
    </citation>
    <scope>NUCLEOTIDE SEQUENCE [LARGE SCALE GENOMIC DNA]</scope>
    <source>
        <strain>DSM 2245B / Goettingen</strain>
    </source>
</reference>